<evidence type="ECO:0000255" key="1">
    <source>
        <dbReference type="HAMAP-Rule" id="MF_00134"/>
    </source>
</evidence>
<proteinExistence type="inferred from homology"/>
<sequence length="253" mass="28442">MGTILDKIVDQKKKEVAALYETYTPVKEKRKTRSLVKALEQFTVIAEVKRASPSKGDINLHVDVRKQVKTYEECGAGAVSVLTDGQFFKGSFYDLQTAREESSIPLLCKDFIIDKIQIDRAYEAGADIILLIVAALTKEKLKELYSYVLEKGLEAIVEVHDEQELEIAIQLNPHVIGINNRNLKTFEVDLSQTEKLGKRLNEEKLLWISESGVHSKEDMIRVKRAGAKGVLVGEALMTSSSIHTFFEDCKVNI</sequence>
<dbReference type="EC" id="4.1.1.48" evidence="1"/>
<dbReference type="EMBL" id="CP000001">
    <property type="protein sequence ID" value="AAU19114.1"/>
    <property type="molecule type" value="Genomic_DNA"/>
</dbReference>
<dbReference type="RefSeq" id="WP_000536691.1">
    <property type="nucleotide sequence ID" value="NZ_CP009968.1"/>
</dbReference>
<dbReference type="SMR" id="Q63EC9"/>
<dbReference type="KEGG" id="bcz:BCE33L1133"/>
<dbReference type="PATRIC" id="fig|288681.22.peg.4431"/>
<dbReference type="UniPathway" id="UPA00035">
    <property type="reaction ID" value="UER00043"/>
</dbReference>
<dbReference type="Proteomes" id="UP000002612">
    <property type="component" value="Chromosome"/>
</dbReference>
<dbReference type="GO" id="GO:0004425">
    <property type="term" value="F:indole-3-glycerol-phosphate synthase activity"/>
    <property type="evidence" value="ECO:0007669"/>
    <property type="project" value="UniProtKB-UniRule"/>
</dbReference>
<dbReference type="GO" id="GO:0004640">
    <property type="term" value="F:phosphoribosylanthranilate isomerase activity"/>
    <property type="evidence" value="ECO:0007669"/>
    <property type="project" value="TreeGrafter"/>
</dbReference>
<dbReference type="GO" id="GO:0000162">
    <property type="term" value="P:L-tryptophan biosynthetic process"/>
    <property type="evidence" value="ECO:0007669"/>
    <property type="project" value="UniProtKB-UniRule"/>
</dbReference>
<dbReference type="CDD" id="cd00331">
    <property type="entry name" value="IGPS"/>
    <property type="match status" value="1"/>
</dbReference>
<dbReference type="FunFam" id="3.20.20.70:FF:000024">
    <property type="entry name" value="Indole-3-glycerol phosphate synthase"/>
    <property type="match status" value="1"/>
</dbReference>
<dbReference type="Gene3D" id="3.20.20.70">
    <property type="entry name" value="Aldolase class I"/>
    <property type="match status" value="1"/>
</dbReference>
<dbReference type="HAMAP" id="MF_00134_B">
    <property type="entry name" value="IGPS_B"/>
    <property type="match status" value="1"/>
</dbReference>
<dbReference type="InterPro" id="IPR013785">
    <property type="entry name" value="Aldolase_TIM"/>
</dbReference>
<dbReference type="InterPro" id="IPR045186">
    <property type="entry name" value="Indole-3-glycerol_P_synth"/>
</dbReference>
<dbReference type="InterPro" id="IPR013798">
    <property type="entry name" value="Indole-3-glycerol_P_synth_dom"/>
</dbReference>
<dbReference type="InterPro" id="IPR001468">
    <property type="entry name" value="Indole-3-GlycerolPSynthase_CS"/>
</dbReference>
<dbReference type="InterPro" id="IPR011060">
    <property type="entry name" value="RibuloseP-bd_barrel"/>
</dbReference>
<dbReference type="NCBIfam" id="NF001371">
    <property type="entry name" value="PRK00278.1-3"/>
    <property type="match status" value="1"/>
</dbReference>
<dbReference type="NCBIfam" id="NF001377">
    <property type="entry name" value="PRK00278.2-4"/>
    <property type="match status" value="1"/>
</dbReference>
<dbReference type="PANTHER" id="PTHR22854:SF2">
    <property type="entry name" value="INDOLE-3-GLYCEROL-PHOSPHATE SYNTHASE"/>
    <property type="match status" value="1"/>
</dbReference>
<dbReference type="PANTHER" id="PTHR22854">
    <property type="entry name" value="TRYPTOPHAN BIOSYNTHESIS PROTEIN"/>
    <property type="match status" value="1"/>
</dbReference>
<dbReference type="Pfam" id="PF00218">
    <property type="entry name" value="IGPS"/>
    <property type="match status" value="1"/>
</dbReference>
<dbReference type="SUPFAM" id="SSF51366">
    <property type="entry name" value="Ribulose-phoshate binding barrel"/>
    <property type="match status" value="1"/>
</dbReference>
<dbReference type="PROSITE" id="PS00614">
    <property type="entry name" value="IGPS"/>
    <property type="match status" value="1"/>
</dbReference>
<feature type="chain" id="PRO_1000018438" description="Indole-3-glycerol phosphate synthase">
    <location>
        <begin position="1"/>
        <end position="253"/>
    </location>
</feature>
<comment type="catalytic activity">
    <reaction evidence="1">
        <text>1-(2-carboxyphenylamino)-1-deoxy-D-ribulose 5-phosphate + H(+) = (1S,2R)-1-C-(indol-3-yl)glycerol 3-phosphate + CO2 + H2O</text>
        <dbReference type="Rhea" id="RHEA:23476"/>
        <dbReference type="ChEBI" id="CHEBI:15377"/>
        <dbReference type="ChEBI" id="CHEBI:15378"/>
        <dbReference type="ChEBI" id="CHEBI:16526"/>
        <dbReference type="ChEBI" id="CHEBI:58613"/>
        <dbReference type="ChEBI" id="CHEBI:58866"/>
        <dbReference type="EC" id="4.1.1.48"/>
    </reaction>
</comment>
<comment type="pathway">
    <text evidence="1">Amino-acid biosynthesis; L-tryptophan biosynthesis; L-tryptophan from chorismate: step 4/5.</text>
</comment>
<comment type="similarity">
    <text evidence="1">Belongs to the TrpC family.</text>
</comment>
<organism>
    <name type="scientific">Bacillus cereus (strain ZK / E33L)</name>
    <dbReference type="NCBI Taxonomy" id="288681"/>
    <lineage>
        <taxon>Bacteria</taxon>
        <taxon>Bacillati</taxon>
        <taxon>Bacillota</taxon>
        <taxon>Bacilli</taxon>
        <taxon>Bacillales</taxon>
        <taxon>Bacillaceae</taxon>
        <taxon>Bacillus</taxon>
        <taxon>Bacillus cereus group</taxon>
    </lineage>
</organism>
<reference key="1">
    <citation type="journal article" date="2006" name="J. Bacteriol.">
        <title>Pathogenomic sequence analysis of Bacillus cereus and Bacillus thuringiensis isolates closely related to Bacillus anthracis.</title>
        <authorList>
            <person name="Han C.S."/>
            <person name="Xie G."/>
            <person name="Challacombe J.F."/>
            <person name="Altherr M.R."/>
            <person name="Bhotika S.S."/>
            <person name="Bruce D."/>
            <person name="Campbell C.S."/>
            <person name="Campbell M.L."/>
            <person name="Chen J."/>
            <person name="Chertkov O."/>
            <person name="Cleland C."/>
            <person name="Dimitrijevic M."/>
            <person name="Doggett N.A."/>
            <person name="Fawcett J.J."/>
            <person name="Glavina T."/>
            <person name="Goodwin L.A."/>
            <person name="Hill K.K."/>
            <person name="Hitchcock P."/>
            <person name="Jackson P.J."/>
            <person name="Keim P."/>
            <person name="Kewalramani A.R."/>
            <person name="Longmire J."/>
            <person name="Lucas S."/>
            <person name="Malfatti S."/>
            <person name="McMurry K."/>
            <person name="Meincke L.J."/>
            <person name="Misra M."/>
            <person name="Moseman B.L."/>
            <person name="Mundt M."/>
            <person name="Munk A.C."/>
            <person name="Okinaka R.T."/>
            <person name="Parson-Quintana B."/>
            <person name="Reilly L.P."/>
            <person name="Richardson P."/>
            <person name="Robinson D.L."/>
            <person name="Rubin E."/>
            <person name="Saunders E."/>
            <person name="Tapia R."/>
            <person name="Tesmer J.G."/>
            <person name="Thayer N."/>
            <person name="Thompson L.S."/>
            <person name="Tice H."/>
            <person name="Ticknor L.O."/>
            <person name="Wills P.L."/>
            <person name="Brettin T.S."/>
            <person name="Gilna P."/>
        </authorList>
    </citation>
    <scope>NUCLEOTIDE SEQUENCE [LARGE SCALE GENOMIC DNA]</scope>
    <source>
        <strain>ZK / E33L</strain>
    </source>
</reference>
<accession>Q63EC9</accession>
<gene>
    <name evidence="1" type="primary">trpC</name>
    <name type="ordered locus">BCE33L1133</name>
</gene>
<protein>
    <recommendedName>
        <fullName evidence="1">Indole-3-glycerol phosphate synthase</fullName>
        <shortName evidence="1">IGPS</shortName>
        <ecNumber evidence="1">4.1.1.48</ecNumber>
    </recommendedName>
</protein>
<keyword id="KW-0028">Amino-acid biosynthesis</keyword>
<keyword id="KW-0057">Aromatic amino acid biosynthesis</keyword>
<keyword id="KW-0210">Decarboxylase</keyword>
<keyword id="KW-0456">Lyase</keyword>
<keyword id="KW-0822">Tryptophan biosynthesis</keyword>
<name>TRPC_BACCZ</name>